<sequence length="474" mass="53522">MKLLQKKGYKVERPLNKGSYGTVVLAHRLFRTPRCKDLKYAIKCIKKPAYTFLQEVNILRQLSRSRHRNIIHFVESFEDNVYYYVVLEYCPLGDLYECILNNDFPNAKNQPEMIKNIFLQIIDGVAHLHSHGIYHRDLKPENFLLSLSEDGSELVVKISDFGLACRDKISYDFGTGSDRYMAPEQFEEVDGAGYSPRAADIWALGICLLNLIFARNPFTYPHEKDPIFADYMLDAMTLFDVFPTLSQDTYNVLRACLCVSPEKRSLAKTREAVLAVTKWTTDDEELESFVNEEEEFRASDFMPAEDNVRCTQSDREPLRTPSVLTPANTIQRGLLPSKLPALSDVDENISTSSSPRSPASLAPVNNSERSYDSGLGESLNNMHIGKSIATAVPVNTKRSPYSCSAPAIVFPNSIKGNKDHLKFGRSWCDMDEEDEEDIVSFGSNDDFGASDELSSKHIGLADDWNVLSQWNDNS</sequence>
<gene>
    <name type="primary">ksp1</name>
    <name type="synonym">ppk20</name>
    <name type="ORF">SPBC16E9.13</name>
</gene>
<evidence type="ECO:0000255" key="1">
    <source>
        <dbReference type="PROSITE-ProRule" id="PRU00159"/>
    </source>
</evidence>
<evidence type="ECO:0000255" key="2">
    <source>
        <dbReference type="PROSITE-ProRule" id="PRU10027"/>
    </source>
</evidence>
<evidence type="ECO:0000256" key="3">
    <source>
        <dbReference type="SAM" id="MobiDB-lite"/>
    </source>
</evidence>
<evidence type="ECO:0000269" key="4">
    <source>
    </source>
</evidence>
<evidence type="ECO:0000269" key="5">
    <source>
    </source>
</evidence>
<dbReference type="EC" id="2.7.11.1"/>
<dbReference type="EMBL" id="CU329671">
    <property type="protein sequence ID" value="CAB16905.1"/>
    <property type="molecule type" value="Genomic_DNA"/>
</dbReference>
<dbReference type="PIR" id="T39587">
    <property type="entry name" value="T39587"/>
</dbReference>
<dbReference type="RefSeq" id="NP_595795.1">
    <property type="nucleotide sequence ID" value="NM_001021696.2"/>
</dbReference>
<dbReference type="SMR" id="O14328"/>
<dbReference type="BioGRID" id="276208">
    <property type="interactions" value="3"/>
</dbReference>
<dbReference type="FunCoup" id="O14328">
    <property type="interactions" value="282"/>
</dbReference>
<dbReference type="STRING" id="284812.O14328"/>
<dbReference type="iPTMnet" id="O14328"/>
<dbReference type="PaxDb" id="4896-SPBC16E9.13.1"/>
<dbReference type="EnsemblFungi" id="SPBC16E9.13.1">
    <property type="protein sequence ID" value="SPBC16E9.13.1:pep"/>
    <property type="gene ID" value="SPBC16E9.13"/>
</dbReference>
<dbReference type="GeneID" id="2539653"/>
<dbReference type="KEGG" id="spo:2539653"/>
<dbReference type="PomBase" id="SPBC16E9.13">
    <property type="gene designation" value="ksp1"/>
</dbReference>
<dbReference type="VEuPathDB" id="FungiDB:SPBC16E9.13"/>
<dbReference type="eggNOG" id="KOG0583">
    <property type="taxonomic scope" value="Eukaryota"/>
</dbReference>
<dbReference type="HOGENOM" id="CLU_000288_172_1_1"/>
<dbReference type="InParanoid" id="O14328"/>
<dbReference type="OMA" id="CSMGDLY"/>
<dbReference type="PhylomeDB" id="O14328"/>
<dbReference type="Reactome" id="R-SPO-176187">
    <property type="pathway name" value="Activation of ATR in response to replication stress"/>
</dbReference>
<dbReference type="Reactome" id="R-SPO-5693616">
    <property type="pathway name" value="Presynaptic phase of homologous DNA pairing and strand exchange"/>
</dbReference>
<dbReference type="Reactome" id="R-SPO-69601">
    <property type="pathway name" value="Ubiquitin Mediated Degradation of Phosphorylated Cdc25A"/>
</dbReference>
<dbReference type="PRO" id="PR:O14328"/>
<dbReference type="Proteomes" id="UP000002485">
    <property type="component" value="Chromosome II"/>
</dbReference>
<dbReference type="GO" id="GO:0005737">
    <property type="term" value="C:cytoplasm"/>
    <property type="evidence" value="ECO:0000318"/>
    <property type="project" value="GO_Central"/>
</dbReference>
<dbReference type="GO" id="GO:0005829">
    <property type="term" value="C:cytosol"/>
    <property type="evidence" value="ECO:0007005"/>
    <property type="project" value="PomBase"/>
</dbReference>
<dbReference type="GO" id="GO:0005634">
    <property type="term" value="C:nucleus"/>
    <property type="evidence" value="ECO:0000318"/>
    <property type="project" value="GO_Central"/>
</dbReference>
<dbReference type="GO" id="GO:0005524">
    <property type="term" value="F:ATP binding"/>
    <property type="evidence" value="ECO:0000255"/>
    <property type="project" value="PomBase"/>
</dbReference>
<dbReference type="GO" id="GO:0106310">
    <property type="term" value="F:protein serine kinase activity"/>
    <property type="evidence" value="ECO:0007669"/>
    <property type="project" value="RHEA"/>
</dbReference>
<dbReference type="GO" id="GO:0004674">
    <property type="term" value="F:protein serine/threonine kinase activity"/>
    <property type="evidence" value="ECO:0000318"/>
    <property type="project" value="GO_Central"/>
</dbReference>
<dbReference type="GO" id="GO:0000086">
    <property type="term" value="P:G2/M transition of mitotic cell cycle"/>
    <property type="evidence" value="ECO:0000318"/>
    <property type="project" value="GO_Central"/>
</dbReference>
<dbReference type="GO" id="GO:0031929">
    <property type="term" value="P:TOR signaling"/>
    <property type="evidence" value="ECO:0000266"/>
    <property type="project" value="PomBase"/>
</dbReference>
<dbReference type="CDD" id="cd13993">
    <property type="entry name" value="STKc_Pat1_like"/>
    <property type="match status" value="1"/>
</dbReference>
<dbReference type="FunFam" id="1.10.510.10:FF:000693">
    <property type="entry name" value="Serine/threonine protein kinase, putative"/>
    <property type="match status" value="1"/>
</dbReference>
<dbReference type="Gene3D" id="1.10.510.10">
    <property type="entry name" value="Transferase(Phosphotransferase) domain 1"/>
    <property type="match status" value="1"/>
</dbReference>
<dbReference type="InterPro" id="IPR011009">
    <property type="entry name" value="Kinase-like_dom_sf"/>
</dbReference>
<dbReference type="InterPro" id="IPR000719">
    <property type="entry name" value="Prot_kinase_dom"/>
</dbReference>
<dbReference type="InterPro" id="IPR008271">
    <property type="entry name" value="Ser/Thr_kinase_AS"/>
</dbReference>
<dbReference type="PANTHER" id="PTHR24345">
    <property type="entry name" value="SERINE/THREONINE-PROTEIN KINASE PLK"/>
    <property type="match status" value="1"/>
</dbReference>
<dbReference type="PANTHER" id="PTHR24345:SF91">
    <property type="entry name" value="SERINE_THREONINE-PROTEIN KINASE PLK4"/>
    <property type="match status" value="1"/>
</dbReference>
<dbReference type="Pfam" id="PF00069">
    <property type="entry name" value="Pkinase"/>
    <property type="match status" value="1"/>
</dbReference>
<dbReference type="SMART" id="SM00220">
    <property type="entry name" value="S_TKc"/>
    <property type="match status" value="1"/>
</dbReference>
<dbReference type="SUPFAM" id="SSF56112">
    <property type="entry name" value="Protein kinase-like (PK-like)"/>
    <property type="match status" value="1"/>
</dbReference>
<dbReference type="PROSITE" id="PS50011">
    <property type="entry name" value="PROTEIN_KINASE_DOM"/>
    <property type="match status" value="1"/>
</dbReference>
<dbReference type="PROSITE" id="PS00108">
    <property type="entry name" value="PROTEIN_KINASE_ST"/>
    <property type="match status" value="1"/>
</dbReference>
<feature type="chain" id="PRO_0000256814" description="Serine/threonine-protein kinase ksp1">
    <location>
        <begin position="1"/>
        <end position="474"/>
    </location>
</feature>
<feature type="domain" description="Protein kinase" evidence="1">
    <location>
        <begin position="9"/>
        <end position="280"/>
    </location>
</feature>
<feature type="region of interest" description="Disordered" evidence="3">
    <location>
        <begin position="345"/>
        <end position="373"/>
    </location>
</feature>
<feature type="compositionally biased region" description="Low complexity" evidence="3">
    <location>
        <begin position="350"/>
        <end position="363"/>
    </location>
</feature>
<feature type="active site" description="Proton acceptor" evidence="1 2">
    <location>
        <position position="137"/>
    </location>
</feature>
<feature type="binding site" evidence="1">
    <location>
        <begin position="15"/>
        <end position="23"/>
    </location>
    <ligand>
        <name>ATP</name>
        <dbReference type="ChEBI" id="CHEBI:30616"/>
    </ligand>
</feature>
<feature type="binding site" evidence="1">
    <location>
        <position position="43"/>
    </location>
    <ligand>
        <name>ATP</name>
        <dbReference type="ChEBI" id="CHEBI:30616"/>
    </ligand>
</feature>
<feature type="modified residue" description="Phosphoserine" evidence="5">
    <location>
        <position position="353"/>
    </location>
</feature>
<feature type="modified residue" description="Phosphoserine" evidence="5">
    <location>
        <position position="354"/>
    </location>
</feature>
<feature type="modified residue" description="Phosphoserine" evidence="5">
    <location>
        <position position="357"/>
    </location>
</feature>
<feature type="modified residue" description="Phosphoserine" evidence="5">
    <location>
        <position position="378"/>
    </location>
</feature>
<feature type="modified residue" description="Phosphoserine" evidence="5">
    <location>
        <position position="404"/>
    </location>
</feature>
<feature type="modified residue" description="Phosphoserine" evidence="5">
    <location>
        <position position="413"/>
    </location>
</feature>
<comment type="catalytic activity">
    <reaction>
        <text>L-seryl-[protein] + ATP = O-phospho-L-seryl-[protein] + ADP + H(+)</text>
        <dbReference type="Rhea" id="RHEA:17989"/>
        <dbReference type="Rhea" id="RHEA-COMP:9863"/>
        <dbReference type="Rhea" id="RHEA-COMP:11604"/>
        <dbReference type="ChEBI" id="CHEBI:15378"/>
        <dbReference type="ChEBI" id="CHEBI:29999"/>
        <dbReference type="ChEBI" id="CHEBI:30616"/>
        <dbReference type="ChEBI" id="CHEBI:83421"/>
        <dbReference type="ChEBI" id="CHEBI:456216"/>
        <dbReference type="EC" id="2.7.11.1"/>
    </reaction>
</comment>
<comment type="catalytic activity">
    <reaction>
        <text>L-threonyl-[protein] + ATP = O-phospho-L-threonyl-[protein] + ADP + H(+)</text>
        <dbReference type="Rhea" id="RHEA:46608"/>
        <dbReference type="Rhea" id="RHEA-COMP:11060"/>
        <dbReference type="Rhea" id="RHEA-COMP:11605"/>
        <dbReference type="ChEBI" id="CHEBI:15378"/>
        <dbReference type="ChEBI" id="CHEBI:30013"/>
        <dbReference type="ChEBI" id="CHEBI:30616"/>
        <dbReference type="ChEBI" id="CHEBI:61977"/>
        <dbReference type="ChEBI" id="CHEBI:456216"/>
        <dbReference type="EC" id="2.7.11.1"/>
    </reaction>
</comment>
<comment type="subcellular location">
    <subcellularLocation>
        <location evidence="4">Cytoplasm</location>
    </subcellularLocation>
    <subcellularLocation>
        <location evidence="4">Nucleus</location>
    </subcellularLocation>
</comment>
<comment type="similarity">
    <text evidence="1">Belongs to the protein kinase superfamily. Ser/Thr protein kinase family.</text>
</comment>
<keyword id="KW-0067">ATP-binding</keyword>
<keyword id="KW-0963">Cytoplasm</keyword>
<keyword id="KW-0418">Kinase</keyword>
<keyword id="KW-0547">Nucleotide-binding</keyword>
<keyword id="KW-0539">Nucleus</keyword>
<keyword id="KW-0597">Phosphoprotein</keyword>
<keyword id="KW-1185">Reference proteome</keyword>
<keyword id="KW-0723">Serine/threonine-protein kinase</keyword>
<keyword id="KW-0808">Transferase</keyword>
<reference key="1">
    <citation type="journal article" date="2002" name="Nature">
        <title>The genome sequence of Schizosaccharomyces pombe.</title>
        <authorList>
            <person name="Wood V."/>
            <person name="Gwilliam R."/>
            <person name="Rajandream M.A."/>
            <person name="Lyne M.H."/>
            <person name="Lyne R."/>
            <person name="Stewart A."/>
            <person name="Sgouros J.G."/>
            <person name="Peat N."/>
            <person name="Hayles J."/>
            <person name="Baker S.G."/>
            <person name="Basham D."/>
            <person name="Bowman S."/>
            <person name="Brooks K."/>
            <person name="Brown D."/>
            <person name="Brown S."/>
            <person name="Chillingworth T."/>
            <person name="Churcher C.M."/>
            <person name="Collins M."/>
            <person name="Connor R."/>
            <person name="Cronin A."/>
            <person name="Davis P."/>
            <person name="Feltwell T."/>
            <person name="Fraser A."/>
            <person name="Gentles S."/>
            <person name="Goble A."/>
            <person name="Hamlin N."/>
            <person name="Harris D.E."/>
            <person name="Hidalgo J."/>
            <person name="Hodgson G."/>
            <person name="Holroyd S."/>
            <person name="Hornsby T."/>
            <person name="Howarth S."/>
            <person name="Huckle E.J."/>
            <person name="Hunt S."/>
            <person name="Jagels K."/>
            <person name="James K.D."/>
            <person name="Jones L."/>
            <person name="Jones M."/>
            <person name="Leather S."/>
            <person name="McDonald S."/>
            <person name="McLean J."/>
            <person name="Mooney P."/>
            <person name="Moule S."/>
            <person name="Mungall K.L."/>
            <person name="Murphy L.D."/>
            <person name="Niblett D."/>
            <person name="Odell C."/>
            <person name="Oliver K."/>
            <person name="O'Neil S."/>
            <person name="Pearson D."/>
            <person name="Quail M.A."/>
            <person name="Rabbinowitsch E."/>
            <person name="Rutherford K.M."/>
            <person name="Rutter S."/>
            <person name="Saunders D."/>
            <person name="Seeger K."/>
            <person name="Sharp S."/>
            <person name="Skelton J."/>
            <person name="Simmonds M.N."/>
            <person name="Squares R."/>
            <person name="Squares S."/>
            <person name="Stevens K."/>
            <person name="Taylor K."/>
            <person name="Taylor R.G."/>
            <person name="Tivey A."/>
            <person name="Walsh S.V."/>
            <person name="Warren T."/>
            <person name="Whitehead S."/>
            <person name="Woodward J.R."/>
            <person name="Volckaert G."/>
            <person name="Aert R."/>
            <person name="Robben J."/>
            <person name="Grymonprez B."/>
            <person name="Weltjens I."/>
            <person name="Vanstreels E."/>
            <person name="Rieger M."/>
            <person name="Schaefer M."/>
            <person name="Mueller-Auer S."/>
            <person name="Gabel C."/>
            <person name="Fuchs M."/>
            <person name="Duesterhoeft A."/>
            <person name="Fritzc C."/>
            <person name="Holzer E."/>
            <person name="Moestl D."/>
            <person name="Hilbert H."/>
            <person name="Borzym K."/>
            <person name="Langer I."/>
            <person name="Beck A."/>
            <person name="Lehrach H."/>
            <person name="Reinhardt R."/>
            <person name="Pohl T.M."/>
            <person name="Eger P."/>
            <person name="Zimmermann W."/>
            <person name="Wedler H."/>
            <person name="Wambutt R."/>
            <person name="Purnelle B."/>
            <person name="Goffeau A."/>
            <person name="Cadieu E."/>
            <person name="Dreano S."/>
            <person name="Gloux S."/>
            <person name="Lelaure V."/>
            <person name="Mottier S."/>
            <person name="Galibert F."/>
            <person name="Aves S.J."/>
            <person name="Xiang Z."/>
            <person name="Hunt C."/>
            <person name="Moore K."/>
            <person name="Hurst S.M."/>
            <person name="Lucas M."/>
            <person name="Rochet M."/>
            <person name="Gaillardin C."/>
            <person name="Tallada V.A."/>
            <person name="Garzon A."/>
            <person name="Thode G."/>
            <person name="Daga R.R."/>
            <person name="Cruzado L."/>
            <person name="Jimenez J."/>
            <person name="Sanchez M."/>
            <person name="del Rey F."/>
            <person name="Benito J."/>
            <person name="Dominguez A."/>
            <person name="Revuelta J.L."/>
            <person name="Moreno S."/>
            <person name="Armstrong J."/>
            <person name="Forsburg S.L."/>
            <person name="Cerutti L."/>
            <person name="Lowe T."/>
            <person name="McCombie W.R."/>
            <person name="Paulsen I."/>
            <person name="Potashkin J."/>
            <person name="Shpakovski G.V."/>
            <person name="Ussery D."/>
            <person name="Barrell B.G."/>
            <person name="Nurse P."/>
        </authorList>
    </citation>
    <scope>NUCLEOTIDE SEQUENCE [LARGE SCALE GENOMIC DNA]</scope>
    <source>
        <strain>972 / ATCC 24843</strain>
    </source>
</reference>
<reference key="2">
    <citation type="journal article" date="2005" name="Eukaryot. Cell">
        <title>Systematic deletion analysis of fission yeast protein kinases.</title>
        <authorList>
            <person name="Bimbo A."/>
            <person name="Jia Y."/>
            <person name="Poh S.L."/>
            <person name="Karuturi R.K.M."/>
            <person name="den Elzen N."/>
            <person name="Peng X."/>
            <person name="Zheng L."/>
            <person name="O'Connell M."/>
            <person name="Liu E.T."/>
            <person name="Balasubramanian M.K."/>
            <person name="Liu J."/>
        </authorList>
    </citation>
    <scope>IDENTIFICATION</scope>
</reference>
<reference key="3">
    <citation type="journal article" date="2006" name="Nat. Biotechnol.">
        <title>ORFeome cloning and global analysis of protein localization in the fission yeast Schizosaccharomyces pombe.</title>
        <authorList>
            <person name="Matsuyama A."/>
            <person name="Arai R."/>
            <person name="Yashiroda Y."/>
            <person name="Shirai A."/>
            <person name="Kamata A."/>
            <person name="Sekido S."/>
            <person name="Kobayashi Y."/>
            <person name="Hashimoto A."/>
            <person name="Hamamoto M."/>
            <person name="Hiraoka Y."/>
            <person name="Horinouchi S."/>
            <person name="Yoshida M."/>
        </authorList>
    </citation>
    <scope>SUBCELLULAR LOCATION [LARGE SCALE ANALYSIS]</scope>
</reference>
<reference key="4">
    <citation type="journal article" date="2008" name="J. Proteome Res.">
        <title>Phosphoproteome analysis of fission yeast.</title>
        <authorList>
            <person name="Wilson-Grady J.T."/>
            <person name="Villen J."/>
            <person name="Gygi S.P."/>
        </authorList>
    </citation>
    <scope>PHOSPHORYLATION [LARGE SCALE ANALYSIS] AT SER-353; SER-354; SER-357; SER-378; SER-404 AND SER-413</scope>
    <scope>IDENTIFICATION BY MASS SPECTROMETRY</scope>
</reference>
<organism>
    <name type="scientific">Schizosaccharomyces pombe (strain 972 / ATCC 24843)</name>
    <name type="common">Fission yeast</name>
    <dbReference type="NCBI Taxonomy" id="284812"/>
    <lineage>
        <taxon>Eukaryota</taxon>
        <taxon>Fungi</taxon>
        <taxon>Dikarya</taxon>
        <taxon>Ascomycota</taxon>
        <taxon>Taphrinomycotina</taxon>
        <taxon>Schizosaccharomycetes</taxon>
        <taxon>Schizosaccharomycetales</taxon>
        <taxon>Schizosaccharomycetaceae</taxon>
        <taxon>Schizosaccharomyces</taxon>
    </lineage>
</organism>
<proteinExistence type="evidence at protein level"/>
<protein>
    <recommendedName>
        <fullName>Serine/threonine-protein kinase ksp1</fullName>
        <ecNumber>2.7.11.1</ecNumber>
    </recommendedName>
    <alternativeName>
        <fullName>Serine/threonine-protein kinase ppk20</fullName>
    </alternativeName>
</protein>
<accession>O14328</accession>
<name>KSP1_SCHPO</name>